<proteinExistence type="evidence at transcript level"/>
<feature type="signal peptide" evidence="2">
    <location>
        <begin position="1"/>
        <end position="28"/>
    </location>
</feature>
<feature type="chain" id="PRO_0000019686" description="Nicastrin">
    <location>
        <begin position="29"/>
        <end position="676"/>
    </location>
</feature>
<feature type="topological domain" description="Extracellular" evidence="2">
    <location>
        <begin position="29"/>
        <end position="644"/>
    </location>
</feature>
<feature type="transmembrane region" description="Helical" evidence="2">
    <location>
        <begin position="645"/>
        <end position="665"/>
    </location>
</feature>
<feature type="topological domain" description="Cytoplasmic" evidence="2">
    <location>
        <begin position="666"/>
        <end position="676"/>
    </location>
</feature>
<feature type="glycosylation site" description="N-linked (GlcNAc...) asparagine" evidence="2">
    <location>
        <position position="58"/>
    </location>
</feature>
<feature type="glycosylation site" description="N-linked (GlcNAc...) asparagine" evidence="2">
    <location>
        <position position="336"/>
    </location>
</feature>
<feature type="glycosylation site" description="N-linked (GlcNAc...) asparagine" evidence="2">
    <location>
        <position position="371"/>
    </location>
</feature>
<feature type="glycosylation site" description="N-linked (GlcNAc...) asparagine" evidence="2">
    <location>
        <position position="444"/>
    </location>
</feature>
<feature type="glycosylation site" description="N-linked (GlcNAc...) asparagine" evidence="2">
    <location>
        <position position="480"/>
    </location>
</feature>
<feature type="glycosylation site" description="N-linked (GlcNAc...) asparagine" evidence="2">
    <location>
        <position position="555"/>
    </location>
</feature>
<feature type="glycosylation site" description="N-linked (GlcNAc...) asparagine" evidence="2">
    <location>
        <position position="611"/>
    </location>
</feature>
<name>NICA_ARATH</name>
<dbReference type="EMBL" id="AL353912">
    <property type="protein sequence ID" value="CAB89225.1"/>
    <property type="status" value="ALT_SEQ"/>
    <property type="molecule type" value="Genomic_DNA"/>
</dbReference>
<dbReference type="EMBL" id="AL353912">
    <property type="protein sequence ID" value="CAB89226.1"/>
    <property type="status" value="ALT_SEQ"/>
    <property type="molecule type" value="Genomic_DNA"/>
</dbReference>
<dbReference type="EMBL" id="CP002686">
    <property type="protein sequence ID" value="AEE78974.1"/>
    <property type="molecule type" value="Genomic_DNA"/>
</dbReference>
<dbReference type="EMBL" id="BT002382">
    <property type="protein sequence ID" value="AAO00742.1"/>
    <property type="molecule type" value="mRNA"/>
</dbReference>
<dbReference type="EMBL" id="BT008417">
    <property type="protein sequence ID" value="AAP37776.1"/>
    <property type="molecule type" value="mRNA"/>
</dbReference>
<dbReference type="PIR" id="T49017">
    <property type="entry name" value="T49017"/>
</dbReference>
<dbReference type="PIR" id="T49018">
    <property type="entry name" value="T49018"/>
</dbReference>
<dbReference type="RefSeq" id="NP_190832.3">
    <molecule id="Q8GUM5-1"/>
    <property type="nucleotide sequence ID" value="NM_115124.5"/>
</dbReference>
<dbReference type="SMR" id="Q8GUM5"/>
<dbReference type="BioGRID" id="9748">
    <property type="interactions" value="37"/>
</dbReference>
<dbReference type="FunCoup" id="Q8GUM5">
    <property type="interactions" value="4001"/>
</dbReference>
<dbReference type="STRING" id="3702.Q8GUM5"/>
<dbReference type="GlyGen" id="Q8GUM5">
    <property type="glycosylation" value="7 sites"/>
</dbReference>
<dbReference type="PaxDb" id="3702-AT3G52640.2"/>
<dbReference type="ProteomicsDB" id="251149">
    <molecule id="Q8GUM5-1"/>
</dbReference>
<dbReference type="EnsemblPlants" id="AT3G52640.1">
    <molecule id="Q8GUM5-1"/>
    <property type="protein sequence ID" value="AT3G52640.1"/>
    <property type="gene ID" value="AT3G52640"/>
</dbReference>
<dbReference type="Gramene" id="AT3G52640.1">
    <molecule id="Q8GUM5-1"/>
    <property type="protein sequence ID" value="AT3G52640.1"/>
    <property type="gene ID" value="AT3G52640"/>
</dbReference>
<dbReference type="KEGG" id="ath:AT3G52640"/>
<dbReference type="Araport" id="AT3G52640"/>
<dbReference type="TAIR" id="AT3G52640">
    <property type="gene designation" value="NCT"/>
</dbReference>
<dbReference type="eggNOG" id="KOG2657">
    <property type="taxonomic scope" value="Eukaryota"/>
</dbReference>
<dbReference type="InParanoid" id="Q8GUM5"/>
<dbReference type="OMA" id="ECVYPGV"/>
<dbReference type="PhylomeDB" id="Q8GUM5"/>
<dbReference type="PRO" id="PR:Q8GUM5"/>
<dbReference type="Proteomes" id="UP000006548">
    <property type="component" value="Chromosome 3"/>
</dbReference>
<dbReference type="ExpressionAtlas" id="Q8GUM5">
    <property type="expression patterns" value="baseline and differential"/>
</dbReference>
<dbReference type="GO" id="GO:0005886">
    <property type="term" value="C:plasma membrane"/>
    <property type="evidence" value="ECO:0000318"/>
    <property type="project" value="GO_Central"/>
</dbReference>
<dbReference type="GO" id="GO:0007219">
    <property type="term" value="P:Notch signaling pathway"/>
    <property type="evidence" value="ECO:0007669"/>
    <property type="project" value="UniProtKB-KW"/>
</dbReference>
<dbReference type="GO" id="GO:0016485">
    <property type="term" value="P:protein processing"/>
    <property type="evidence" value="ECO:0000318"/>
    <property type="project" value="GO_Central"/>
</dbReference>
<dbReference type="CDD" id="cd03881">
    <property type="entry name" value="M28_Nicastrin"/>
    <property type="match status" value="1"/>
</dbReference>
<dbReference type="FunFam" id="3.40.630.10:FF:000075">
    <property type="entry name" value="Nicastrin"/>
    <property type="match status" value="1"/>
</dbReference>
<dbReference type="Gene3D" id="3.40.630.10">
    <property type="entry name" value="Zn peptidases"/>
    <property type="match status" value="1"/>
</dbReference>
<dbReference type="InterPro" id="IPR041084">
    <property type="entry name" value="Ncstrn_small"/>
</dbReference>
<dbReference type="InterPro" id="IPR008710">
    <property type="entry name" value="Nicastrin"/>
</dbReference>
<dbReference type="PANTHER" id="PTHR21092">
    <property type="entry name" value="NICASTRIN"/>
    <property type="match status" value="1"/>
</dbReference>
<dbReference type="PANTHER" id="PTHR21092:SF0">
    <property type="entry name" value="NICASTRIN"/>
    <property type="match status" value="1"/>
</dbReference>
<dbReference type="Pfam" id="PF18266">
    <property type="entry name" value="Ncstrn_small"/>
    <property type="match status" value="1"/>
</dbReference>
<dbReference type="Pfam" id="PF05450">
    <property type="entry name" value="Nicastrin"/>
    <property type="match status" value="1"/>
</dbReference>
<dbReference type="SUPFAM" id="SSF53187">
    <property type="entry name" value="Zn-dependent exopeptidases"/>
    <property type="match status" value="1"/>
</dbReference>
<keyword id="KW-0025">Alternative splicing</keyword>
<keyword id="KW-0325">Glycoprotein</keyword>
<keyword id="KW-0472">Membrane</keyword>
<keyword id="KW-0914">Notch signaling pathway</keyword>
<keyword id="KW-1185">Reference proteome</keyword>
<keyword id="KW-0732">Signal</keyword>
<keyword id="KW-0812">Transmembrane</keyword>
<keyword id="KW-1133">Transmembrane helix</keyword>
<protein>
    <recommendedName>
        <fullName>Nicastrin</fullName>
    </recommendedName>
</protein>
<comment type="function">
    <text evidence="1">Probable subunit of the gamma-secretase complex, an endoprotease complex that catalyzes the intramembrane cleavage of integral membrane proteins such as Notch.</text>
</comment>
<comment type="subunit">
    <text evidence="1">Probable component of the gamma-secretase complex, a complex composed of a presenilin homodimer, nicastrin, APH1 and PEN2.</text>
</comment>
<comment type="subcellular location">
    <subcellularLocation>
        <location evidence="3">Membrane</location>
        <topology evidence="3">Single-pass type I membrane protein</topology>
    </subcellularLocation>
</comment>
<comment type="alternative products">
    <event type="alternative splicing"/>
    <isoform>
        <id>Q8GUM5-1</id>
        <name>1</name>
        <sequence type="displayed"/>
    </isoform>
    <text>A number of isoforms are produced. According to EST sequences.</text>
</comment>
<comment type="similarity">
    <text evidence="3">Belongs to the nicastrin family.</text>
</comment>
<comment type="sequence caution" evidence="3">
    <conflict type="erroneous gene model prediction">
        <sequence resource="EMBL-CDS" id="CAB89225"/>
    </conflict>
    <text>Was originally thought to correspond to two different genes At3g52640 and At3g52650.</text>
</comment>
<comment type="sequence caution" evidence="3">
    <conflict type="erroneous gene model prediction">
        <sequence resource="EMBL-CDS" id="CAB89226"/>
    </conflict>
    <text>Was originally thought to correspond to two different genes At3g52640 and At3g52650.</text>
</comment>
<gene>
    <name type="ordered locus">At3g52640/At3g52650</name>
    <name type="ORF">F3C22.40/F3C22.50</name>
</gene>
<organism>
    <name type="scientific">Arabidopsis thaliana</name>
    <name type="common">Mouse-ear cress</name>
    <dbReference type="NCBI Taxonomy" id="3702"/>
    <lineage>
        <taxon>Eukaryota</taxon>
        <taxon>Viridiplantae</taxon>
        <taxon>Streptophyta</taxon>
        <taxon>Embryophyta</taxon>
        <taxon>Tracheophyta</taxon>
        <taxon>Spermatophyta</taxon>
        <taxon>Magnoliopsida</taxon>
        <taxon>eudicotyledons</taxon>
        <taxon>Gunneridae</taxon>
        <taxon>Pentapetalae</taxon>
        <taxon>rosids</taxon>
        <taxon>malvids</taxon>
        <taxon>Brassicales</taxon>
        <taxon>Brassicaceae</taxon>
        <taxon>Camelineae</taxon>
        <taxon>Arabidopsis</taxon>
    </lineage>
</organism>
<reference key="1">
    <citation type="journal article" date="2000" name="Nature">
        <title>Sequence and analysis of chromosome 3 of the plant Arabidopsis thaliana.</title>
        <authorList>
            <person name="Salanoubat M."/>
            <person name="Lemcke K."/>
            <person name="Rieger M."/>
            <person name="Ansorge W."/>
            <person name="Unseld M."/>
            <person name="Fartmann B."/>
            <person name="Valle G."/>
            <person name="Bloecker H."/>
            <person name="Perez-Alonso M."/>
            <person name="Obermaier B."/>
            <person name="Delseny M."/>
            <person name="Boutry M."/>
            <person name="Grivell L.A."/>
            <person name="Mache R."/>
            <person name="Puigdomenech P."/>
            <person name="De Simone V."/>
            <person name="Choisne N."/>
            <person name="Artiguenave F."/>
            <person name="Robert C."/>
            <person name="Brottier P."/>
            <person name="Wincker P."/>
            <person name="Cattolico L."/>
            <person name="Weissenbach J."/>
            <person name="Saurin W."/>
            <person name="Quetier F."/>
            <person name="Schaefer M."/>
            <person name="Mueller-Auer S."/>
            <person name="Gabel C."/>
            <person name="Fuchs M."/>
            <person name="Benes V."/>
            <person name="Wurmbach E."/>
            <person name="Drzonek H."/>
            <person name="Erfle H."/>
            <person name="Jordan N."/>
            <person name="Bangert S."/>
            <person name="Wiedelmann R."/>
            <person name="Kranz H."/>
            <person name="Voss H."/>
            <person name="Holland R."/>
            <person name="Brandt P."/>
            <person name="Nyakatura G."/>
            <person name="Vezzi A."/>
            <person name="D'Angelo M."/>
            <person name="Pallavicini A."/>
            <person name="Toppo S."/>
            <person name="Simionati B."/>
            <person name="Conrad A."/>
            <person name="Hornischer K."/>
            <person name="Kauer G."/>
            <person name="Loehnert T.-H."/>
            <person name="Nordsiek G."/>
            <person name="Reichelt J."/>
            <person name="Scharfe M."/>
            <person name="Schoen O."/>
            <person name="Bargues M."/>
            <person name="Terol J."/>
            <person name="Climent J."/>
            <person name="Navarro P."/>
            <person name="Collado C."/>
            <person name="Perez-Perez A."/>
            <person name="Ottenwaelder B."/>
            <person name="Duchemin D."/>
            <person name="Cooke R."/>
            <person name="Laudie M."/>
            <person name="Berger-Llauro C."/>
            <person name="Purnelle B."/>
            <person name="Masuy D."/>
            <person name="de Haan M."/>
            <person name="Maarse A.C."/>
            <person name="Alcaraz J.-P."/>
            <person name="Cottet A."/>
            <person name="Casacuberta E."/>
            <person name="Monfort A."/>
            <person name="Argiriou A."/>
            <person name="Flores M."/>
            <person name="Liguori R."/>
            <person name="Vitale D."/>
            <person name="Mannhaupt G."/>
            <person name="Haase D."/>
            <person name="Schoof H."/>
            <person name="Rudd S."/>
            <person name="Zaccaria P."/>
            <person name="Mewes H.-W."/>
            <person name="Mayer K.F.X."/>
            <person name="Kaul S."/>
            <person name="Town C.D."/>
            <person name="Koo H.L."/>
            <person name="Tallon L.J."/>
            <person name="Jenkins J."/>
            <person name="Rooney T."/>
            <person name="Rizzo M."/>
            <person name="Walts A."/>
            <person name="Utterback T."/>
            <person name="Fujii C.Y."/>
            <person name="Shea T.P."/>
            <person name="Creasy T.H."/>
            <person name="Haas B."/>
            <person name="Maiti R."/>
            <person name="Wu D."/>
            <person name="Peterson J."/>
            <person name="Van Aken S."/>
            <person name="Pai G."/>
            <person name="Militscher J."/>
            <person name="Sellers P."/>
            <person name="Gill J.E."/>
            <person name="Feldblyum T.V."/>
            <person name="Preuss D."/>
            <person name="Lin X."/>
            <person name="Nierman W.C."/>
            <person name="Salzberg S.L."/>
            <person name="White O."/>
            <person name="Venter J.C."/>
            <person name="Fraser C.M."/>
            <person name="Kaneko T."/>
            <person name="Nakamura Y."/>
            <person name="Sato S."/>
            <person name="Kato T."/>
            <person name="Asamizu E."/>
            <person name="Sasamoto S."/>
            <person name="Kimura T."/>
            <person name="Idesawa K."/>
            <person name="Kawashima K."/>
            <person name="Kishida Y."/>
            <person name="Kiyokawa C."/>
            <person name="Kohara M."/>
            <person name="Matsumoto M."/>
            <person name="Matsuno A."/>
            <person name="Muraki A."/>
            <person name="Nakayama S."/>
            <person name="Nakazaki N."/>
            <person name="Shinpo S."/>
            <person name="Takeuchi C."/>
            <person name="Wada T."/>
            <person name="Watanabe A."/>
            <person name="Yamada M."/>
            <person name="Yasuda M."/>
            <person name="Tabata S."/>
        </authorList>
    </citation>
    <scope>NUCLEOTIDE SEQUENCE [LARGE SCALE GENOMIC DNA]</scope>
    <source>
        <strain>cv. Columbia</strain>
    </source>
</reference>
<reference key="2">
    <citation type="journal article" date="2017" name="Plant J.">
        <title>Araport11: a complete reannotation of the Arabidopsis thaliana reference genome.</title>
        <authorList>
            <person name="Cheng C.Y."/>
            <person name="Krishnakumar V."/>
            <person name="Chan A.P."/>
            <person name="Thibaud-Nissen F."/>
            <person name="Schobel S."/>
            <person name="Town C.D."/>
        </authorList>
    </citation>
    <scope>GENOME REANNOTATION</scope>
    <source>
        <strain>cv. Columbia</strain>
    </source>
</reference>
<reference key="3">
    <citation type="journal article" date="2003" name="Science">
        <title>Empirical analysis of transcriptional activity in the Arabidopsis genome.</title>
        <authorList>
            <person name="Yamada K."/>
            <person name="Lim J."/>
            <person name="Dale J.M."/>
            <person name="Chen H."/>
            <person name="Shinn P."/>
            <person name="Palm C.J."/>
            <person name="Southwick A.M."/>
            <person name="Wu H.C."/>
            <person name="Kim C.J."/>
            <person name="Nguyen M."/>
            <person name="Pham P.K."/>
            <person name="Cheuk R.F."/>
            <person name="Karlin-Newmann G."/>
            <person name="Liu S.X."/>
            <person name="Lam B."/>
            <person name="Sakano H."/>
            <person name="Wu T."/>
            <person name="Yu G."/>
            <person name="Miranda M."/>
            <person name="Quach H.L."/>
            <person name="Tripp M."/>
            <person name="Chang C.H."/>
            <person name="Lee J.M."/>
            <person name="Toriumi M.J."/>
            <person name="Chan M.M."/>
            <person name="Tang C.C."/>
            <person name="Onodera C.S."/>
            <person name="Deng J.M."/>
            <person name="Akiyama K."/>
            <person name="Ansari Y."/>
            <person name="Arakawa T."/>
            <person name="Banh J."/>
            <person name="Banno F."/>
            <person name="Bowser L."/>
            <person name="Brooks S.Y."/>
            <person name="Carninci P."/>
            <person name="Chao Q."/>
            <person name="Choy N."/>
            <person name="Enju A."/>
            <person name="Goldsmith A.D."/>
            <person name="Gurjal M."/>
            <person name="Hansen N.F."/>
            <person name="Hayashizaki Y."/>
            <person name="Johnson-Hopson C."/>
            <person name="Hsuan V.W."/>
            <person name="Iida K."/>
            <person name="Karnes M."/>
            <person name="Khan S."/>
            <person name="Koesema E."/>
            <person name="Ishida J."/>
            <person name="Jiang P.X."/>
            <person name="Jones T."/>
            <person name="Kawai J."/>
            <person name="Kamiya A."/>
            <person name="Meyers C."/>
            <person name="Nakajima M."/>
            <person name="Narusaka M."/>
            <person name="Seki M."/>
            <person name="Sakurai T."/>
            <person name="Satou M."/>
            <person name="Tamse R."/>
            <person name="Vaysberg M."/>
            <person name="Wallender E.K."/>
            <person name="Wong C."/>
            <person name="Yamamura Y."/>
            <person name="Yuan S."/>
            <person name="Shinozaki K."/>
            <person name="Davis R.W."/>
            <person name="Theologis A."/>
            <person name="Ecker J.R."/>
        </authorList>
    </citation>
    <scope>NUCLEOTIDE SEQUENCE [LARGE SCALE MRNA]</scope>
    <source>
        <strain>cv. Columbia</strain>
    </source>
</reference>
<evidence type="ECO:0000250" key="1"/>
<evidence type="ECO:0000255" key="2"/>
<evidence type="ECO:0000305" key="3"/>
<sequence length="676" mass="73007">MAMGLIRLLSIAFTLVLLSILPLHLSLADEITSIESVPDLQKLMYVAVDGFPCVRLLNLSGEIGCSNPGINKVVAPIIKLKDVKDLVQPHTILVTADEMEDFFTRVSTDLSFASKIGGVLVESGSNFQQKLKGFSPDKRFPQAQFSPYENVEYKWNSAASSIMWRNYNFPVYLLSESGISAVHEILSKKKMKHGTYTSDVAEFNMVMETTKAGTHNSEACLQEGTCLPLGGYSVWSSLPPISVSSSNNRKPVVLTVASMDTASFFRDKSFGADSPISGLVALLGAVDALSRVDGISNLKKQLVFLVLTGETWGYLGSRRFLHELDLHSDAVAGLSNTSIETVLEIGSVGKGLSGGINTFFAHKTRVSSVTNMTLDALKIAQDSLASKNIKILSADTANPGIPPSSLMAFMRKNPQTSAVVLEDFDTNFVNKFYHSHLDDLSNINSSSVVAAASVVARTLYILASDNKDTSNSALGSIHVNASFVEELLTCLLACEPGLSCNLVKDYISPTNTCPGNYAGVILGEPSSKPYLGYVGDVSRFLWNFLADKTSVQKGNTTSVCSKGVCSKTDEVCIKAESNKEGTCVVSTTRYVPAYSTRLKYNDGAWTILPQNSSDSMGMVDPVWTESNWDTLRVHVYTVQHSAYDNAVLVAGITVTTLAYIGILAAKSIITKALKQD</sequence>
<accession>Q8GUM5</accession>
<accession>Q9LXJ9</accession>
<accession>Q9LXK0</accession>